<proteinExistence type="inferred from homology"/>
<accession>B7LMZ9</accession>
<reference key="1">
    <citation type="journal article" date="2009" name="PLoS Genet.">
        <title>Organised genome dynamics in the Escherichia coli species results in highly diverse adaptive paths.</title>
        <authorList>
            <person name="Touchon M."/>
            <person name="Hoede C."/>
            <person name="Tenaillon O."/>
            <person name="Barbe V."/>
            <person name="Baeriswyl S."/>
            <person name="Bidet P."/>
            <person name="Bingen E."/>
            <person name="Bonacorsi S."/>
            <person name="Bouchier C."/>
            <person name="Bouvet O."/>
            <person name="Calteau A."/>
            <person name="Chiapello H."/>
            <person name="Clermont O."/>
            <person name="Cruveiller S."/>
            <person name="Danchin A."/>
            <person name="Diard M."/>
            <person name="Dossat C."/>
            <person name="Karoui M.E."/>
            <person name="Frapy E."/>
            <person name="Garry L."/>
            <person name="Ghigo J.M."/>
            <person name="Gilles A.M."/>
            <person name="Johnson J."/>
            <person name="Le Bouguenec C."/>
            <person name="Lescat M."/>
            <person name="Mangenot S."/>
            <person name="Martinez-Jehanne V."/>
            <person name="Matic I."/>
            <person name="Nassif X."/>
            <person name="Oztas S."/>
            <person name="Petit M.A."/>
            <person name="Pichon C."/>
            <person name="Rouy Z."/>
            <person name="Ruf C.S."/>
            <person name="Schneider D."/>
            <person name="Tourret J."/>
            <person name="Vacherie B."/>
            <person name="Vallenet D."/>
            <person name="Medigue C."/>
            <person name="Rocha E.P.C."/>
            <person name="Denamur E."/>
        </authorList>
    </citation>
    <scope>NUCLEOTIDE SEQUENCE [LARGE SCALE GENOMIC DNA]</scope>
    <source>
        <strain>ATCC 35469 / DSM 13698 / BCRC 15582 / CCUG 18766 / IAM 14443 / JCM 21226 / LMG 7866 / NBRC 102419 / NCTC 12128 / CDC 0568-73</strain>
    </source>
</reference>
<name>RIMO_ESCF3</name>
<dbReference type="EC" id="2.8.4.4" evidence="1"/>
<dbReference type="EMBL" id="CU928158">
    <property type="protein sequence ID" value="CAQ88510.1"/>
    <property type="molecule type" value="Genomic_DNA"/>
</dbReference>
<dbReference type="RefSeq" id="WP_000049355.1">
    <property type="nucleotide sequence ID" value="NC_011740.1"/>
</dbReference>
<dbReference type="SMR" id="B7LMZ9"/>
<dbReference type="GeneID" id="75057967"/>
<dbReference type="KEGG" id="efe:EFER_0976"/>
<dbReference type="HOGENOM" id="CLU_018697_0_0_6"/>
<dbReference type="OrthoDB" id="9805215at2"/>
<dbReference type="Proteomes" id="UP000000745">
    <property type="component" value="Chromosome"/>
</dbReference>
<dbReference type="GO" id="GO:0005829">
    <property type="term" value="C:cytosol"/>
    <property type="evidence" value="ECO:0007669"/>
    <property type="project" value="TreeGrafter"/>
</dbReference>
<dbReference type="GO" id="GO:0051539">
    <property type="term" value="F:4 iron, 4 sulfur cluster binding"/>
    <property type="evidence" value="ECO:0007669"/>
    <property type="project" value="UniProtKB-UniRule"/>
</dbReference>
<dbReference type="GO" id="GO:0035599">
    <property type="term" value="F:aspartic acid methylthiotransferase activity"/>
    <property type="evidence" value="ECO:0007669"/>
    <property type="project" value="TreeGrafter"/>
</dbReference>
<dbReference type="GO" id="GO:0046872">
    <property type="term" value="F:metal ion binding"/>
    <property type="evidence" value="ECO:0007669"/>
    <property type="project" value="UniProtKB-KW"/>
</dbReference>
<dbReference type="GO" id="GO:0103039">
    <property type="term" value="F:protein methylthiotransferase activity"/>
    <property type="evidence" value="ECO:0007669"/>
    <property type="project" value="UniProtKB-EC"/>
</dbReference>
<dbReference type="GO" id="GO:0006400">
    <property type="term" value="P:tRNA modification"/>
    <property type="evidence" value="ECO:0007669"/>
    <property type="project" value="InterPro"/>
</dbReference>
<dbReference type="CDD" id="cd01335">
    <property type="entry name" value="Radical_SAM"/>
    <property type="match status" value="1"/>
</dbReference>
<dbReference type="FunFam" id="2.40.50.140:FF:000060">
    <property type="entry name" value="Ribosomal protein S12 methylthiotransferase RimO"/>
    <property type="match status" value="1"/>
</dbReference>
<dbReference type="FunFam" id="3.40.50.12160:FF:000002">
    <property type="entry name" value="Ribosomal protein S12 methylthiotransferase RimO"/>
    <property type="match status" value="1"/>
</dbReference>
<dbReference type="FunFam" id="3.80.30.20:FF:000001">
    <property type="entry name" value="tRNA-2-methylthio-N(6)-dimethylallyladenosine synthase 2"/>
    <property type="match status" value="1"/>
</dbReference>
<dbReference type="Gene3D" id="3.40.50.12160">
    <property type="entry name" value="Methylthiotransferase, N-terminal domain"/>
    <property type="match status" value="1"/>
</dbReference>
<dbReference type="Gene3D" id="2.40.50.140">
    <property type="entry name" value="Nucleic acid-binding proteins"/>
    <property type="match status" value="1"/>
</dbReference>
<dbReference type="Gene3D" id="3.80.30.20">
    <property type="entry name" value="tm_1862 like domain"/>
    <property type="match status" value="1"/>
</dbReference>
<dbReference type="HAMAP" id="MF_01865">
    <property type="entry name" value="MTTase_RimO"/>
    <property type="match status" value="1"/>
</dbReference>
<dbReference type="InterPro" id="IPR006638">
    <property type="entry name" value="Elp3/MiaA/NifB-like_rSAM"/>
</dbReference>
<dbReference type="InterPro" id="IPR005839">
    <property type="entry name" value="Methylthiotransferase"/>
</dbReference>
<dbReference type="InterPro" id="IPR020612">
    <property type="entry name" value="Methylthiotransferase_CS"/>
</dbReference>
<dbReference type="InterPro" id="IPR013848">
    <property type="entry name" value="Methylthiotransferase_N"/>
</dbReference>
<dbReference type="InterPro" id="IPR038135">
    <property type="entry name" value="Methylthiotransferase_N_sf"/>
</dbReference>
<dbReference type="InterPro" id="IPR012340">
    <property type="entry name" value="NA-bd_OB-fold"/>
</dbReference>
<dbReference type="InterPro" id="IPR005840">
    <property type="entry name" value="Ribosomal_uS12_MeSTrfase_RimO"/>
</dbReference>
<dbReference type="InterPro" id="IPR007197">
    <property type="entry name" value="rSAM"/>
</dbReference>
<dbReference type="InterPro" id="IPR023404">
    <property type="entry name" value="rSAM_horseshoe"/>
</dbReference>
<dbReference type="InterPro" id="IPR002792">
    <property type="entry name" value="TRAM_dom"/>
</dbReference>
<dbReference type="NCBIfam" id="TIGR01125">
    <property type="entry name" value="30S ribosomal protein S12 methylthiotransferase RimO"/>
    <property type="match status" value="1"/>
</dbReference>
<dbReference type="NCBIfam" id="TIGR00089">
    <property type="entry name" value="MiaB/RimO family radical SAM methylthiotransferase"/>
    <property type="match status" value="1"/>
</dbReference>
<dbReference type="PANTHER" id="PTHR43837">
    <property type="entry name" value="RIBOSOMAL PROTEIN S12 METHYLTHIOTRANSFERASE RIMO"/>
    <property type="match status" value="1"/>
</dbReference>
<dbReference type="PANTHER" id="PTHR43837:SF1">
    <property type="entry name" value="RIBOSOMAL PROTEIN US12 METHYLTHIOTRANSFERASE RIMO"/>
    <property type="match status" value="1"/>
</dbReference>
<dbReference type="Pfam" id="PF04055">
    <property type="entry name" value="Radical_SAM"/>
    <property type="match status" value="1"/>
</dbReference>
<dbReference type="Pfam" id="PF18693">
    <property type="entry name" value="TRAM_2"/>
    <property type="match status" value="1"/>
</dbReference>
<dbReference type="Pfam" id="PF00919">
    <property type="entry name" value="UPF0004"/>
    <property type="match status" value="1"/>
</dbReference>
<dbReference type="SFLD" id="SFLDG01082">
    <property type="entry name" value="B12-binding_domain_containing"/>
    <property type="match status" value="1"/>
</dbReference>
<dbReference type="SFLD" id="SFLDG01061">
    <property type="entry name" value="methylthiotransferase"/>
    <property type="match status" value="1"/>
</dbReference>
<dbReference type="SFLD" id="SFLDF00274">
    <property type="entry name" value="ribosomal_protein_S12_methylth"/>
    <property type="match status" value="1"/>
</dbReference>
<dbReference type="SMART" id="SM00729">
    <property type="entry name" value="Elp3"/>
    <property type="match status" value="1"/>
</dbReference>
<dbReference type="SUPFAM" id="SSF102114">
    <property type="entry name" value="Radical SAM enzymes"/>
    <property type="match status" value="1"/>
</dbReference>
<dbReference type="PROSITE" id="PS51449">
    <property type="entry name" value="MTTASE_N"/>
    <property type="match status" value="1"/>
</dbReference>
<dbReference type="PROSITE" id="PS01278">
    <property type="entry name" value="MTTASE_RADICAL"/>
    <property type="match status" value="1"/>
</dbReference>
<dbReference type="PROSITE" id="PS51918">
    <property type="entry name" value="RADICAL_SAM"/>
    <property type="match status" value="1"/>
</dbReference>
<dbReference type="PROSITE" id="PS50926">
    <property type="entry name" value="TRAM"/>
    <property type="match status" value="1"/>
</dbReference>
<protein>
    <recommendedName>
        <fullName evidence="1">Ribosomal protein uS12 methylthiotransferase RimO</fullName>
        <shortName evidence="1">uS12 MTTase</shortName>
        <shortName evidence="1">uS12 methylthiotransferase</shortName>
        <ecNumber evidence="1">2.8.4.4</ecNumber>
    </recommendedName>
    <alternativeName>
        <fullName evidence="1">Ribosomal protein uS12 (aspartate-C(3))-methylthiotransferase</fullName>
    </alternativeName>
    <alternativeName>
        <fullName evidence="1">Ribosome maturation factor RimO</fullName>
    </alternativeName>
</protein>
<comment type="function">
    <text evidence="1">Catalyzes the methylthiolation of an aspartic acid residue of ribosomal protein uS12.</text>
</comment>
<comment type="catalytic activity">
    <reaction evidence="1">
        <text>L-aspartate(89)-[ribosomal protein uS12]-hydrogen + (sulfur carrier)-SH + AH2 + 2 S-adenosyl-L-methionine = 3-methylsulfanyl-L-aspartate(89)-[ribosomal protein uS12]-hydrogen + (sulfur carrier)-H + 5'-deoxyadenosine + L-methionine + A + S-adenosyl-L-homocysteine + 2 H(+)</text>
        <dbReference type="Rhea" id="RHEA:37087"/>
        <dbReference type="Rhea" id="RHEA-COMP:10460"/>
        <dbReference type="Rhea" id="RHEA-COMP:10461"/>
        <dbReference type="Rhea" id="RHEA-COMP:14737"/>
        <dbReference type="Rhea" id="RHEA-COMP:14739"/>
        <dbReference type="ChEBI" id="CHEBI:13193"/>
        <dbReference type="ChEBI" id="CHEBI:15378"/>
        <dbReference type="ChEBI" id="CHEBI:17319"/>
        <dbReference type="ChEBI" id="CHEBI:17499"/>
        <dbReference type="ChEBI" id="CHEBI:29917"/>
        <dbReference type="ChEBI" id="CHEBI:29961"/>
        <dbReference type="ChEBI" id="CHEBI:57844"/>
        <dbReference type="ChEBI" id="CHEBI:57856"/>
        <dbReference type="ChEBI" id="CHEBI:59789"/>
        <dbReference type="ChEBI" id="CHEBI:64428"/>
        <dbReference type="ChEBI" id="CHEBI:73599"/>
        <dbReference type="EC" id="2.8.4.4"/>
    </reaction>
</comment>
<comment type="cofactor">
    <cofactor evidence="1">
        <name>[4Fe-4S] cluster</name>
        <dbReference type="ChEBI" id="CHEBI:49883"/>
    </cofactor>
    <text evidence="1">Binds 2 [4Fe-4S] clusters. One cluster is coordinated with 3 cysteines and an exchangeable S-adenosyl-L-methionine.</text>
</comment>
<comment type="subcellular location">
    <subcellularLocation>
        <location evidence="1">Cytoplasm</location>
    </subcellularLocation>
</comment>
<comment type="similarity">
    <text evidence="1">Belongs to the methylthiotransferase family. RimO subfamily.</text>
</comment>
<evidence type="ECO:0000255" key="1">
    <source>
        <dbReference type="HAMAP-Rule" id="MF_01865"/>
    </source>
</evidence>
<evidence type="ECO:0000255" key="2">
    <source>
        <dbReference type="PROSITE-ProRule" id="PRU01266"/>
    </source>
</evidence>
<feature type="chain" id="PRO_0000374833" description="Ribosomal protein uS12 methylthiotransferase RimO">
    <location>
        <begin position="1"/>
        <end position="441"/>
    </location>
</feature>
<feature type="domain" description="MTTase N-terminal" evidence="1">
    <location>
        <begin position="8"/>
        <end position="118"/>
    </location>
</feature>
<feature type="domain" description="Radical SAM core" evidence="2">
    <location>
        <begin position="136"/>
        <end position="373"/>
    </location>
</feature>
<feature type="domain" description="TRAM" evidence="1">
    <location>
        <begin position="376"/>
        <end position="441"/>
    </location>
</feature>
<feature type="binding site" evidence="1">
    <location>
        <position position="17"/>
    </location>
    <ligand>
        <name>[4Fe-4S] cluster</name>
        <dbReference type="ChEBI" id="CHEBI:49883"/>
        <label>1</label>
    </ligand>
</feature>
<feature type="binding site" evidence="1">
    <location>
        <position position="53"/>
    </location>
    <ligand>
        <name>[4Fe-4S] cluster</name>
        <dbReference type="ChEBI" id="CHEBI:49883"/>
        <label>1</label>
    </ligand>
</feature>
<feature type="binding site" evidence="1">
    <location>
        <position position="82"/>
    </location>
    <ligand>
        <name>[4Fe-4S] cluster</name>
        <dbReference type="ChEBI" id="CHEBI:49883"/>
        <label>1</label>
    </ligand>
</feature>
<feature type="binding site" evidence="1">
    <location>
        <position position="150"/>
    </location>
    <ligand>
        <name>[4Fe-4S] cluster</name>
        <dbReference type="ChEBI" id="CHEBI:49883"/>
        <label>2</label>
        <note>4Fe-4S-S-AdoMet</note>
    </ligand>
</feature>
<feature type="binding site" evidence="1">
    <location>
        <position position="154"/>
    </location>
    <ligand>
        <name>[4Fe-4S] cluster</name>
        <dbReference type="ChEBI" id="CHEBI:49883"/>
        <label>2</label>
        <note>4Fe-4S-S-AdoMet</note>
    </ligand>
</feature>
<feature type="binding site" evidence="1">
    <location>
        <position position="157"/>
    </location>
    <ligand>
        <name>[4Fe-4S] cluster</name>
        <dbReference type="ChEBI" id="CHEBI:49883"/>
        <label>2</label>
        <note>4Fe-4S-S-AdoMet</note>
    </ligand>
</feature>
<sequence>MSKVTHQPKIGFVSLGCPKNLVDSERILTELRTEGYDVVPSYDDADMVIVNTCGFIDSAVQESLEAIGEALNENGKVIVTGCLGAKEDQIREVHPKVLEITGPHSYEQVLEHVHHYVPKPKHNPFLSLVPEQGVKLTPRHYAYLKISEGCNHRCTFCIIPSMRGDLVSRPIGDVLSEAKRLVDAGVKEILVISQDTSAYGVDVKHRTGFYNGEPVKTSMVSLCEQLSKLGIWTRLHYVYPYPHVDDVIPLMAEGKILPYLDIPLQHASPRILKLMKRPGSVDRQLARIKQWREICPELTLRSTFIVGFPGETEEDFQMLLDFLKEARLDRVGCFKYSPVEGADANALPDQVPEEVKEERWNRFMQLQQQISAERLQEKVGKEILVIIDEVDDEGAIGRSMADAPEIDGAVYLNGESNVKPGDIVRVKVEHADEYDLWGSRV</sequence>
<organism>
    <name type="scientific">Escherichia fergusonii (strain ATCC 35469 / DSM 13698 / CCUG 18766 / IAM 14443 / JCM 21226 / LMG 7866 / NBRC 102419 / NCTC 12128 / CDC 0568-73)</name>
    <dbReference type="NCBI Taxonomy" id="585054"/>
    <lineage>
        <taxon>Bacteria</taxon>
        <taxon>Pseudomonadati</taxon>
        <taxon>Pseudomonadota</taxon>
        <taxon>Gammaproteobacteria</taxon>
        <taxon>Enterobacterales</taxon>
        <taxon>Enterobacteriaceae</taxon>
        <taxon>Escherichia</taxon>
    </lineage>
</organism>
<gene>
    <name evidence="1" type="primary">rimO</name>
    <name type="ordered locus">EFER_0976</name>
</gene>
<keyword id="KW-0004">4Fe-4S</keyword>
<keyword id="KW-0963">Cytoplasm</keyword>
<keyword id="KW-0408">Iron</keyword>
<keyword id="KW-0411">Iron-sulfur</keyword>
<keyword id="KW-0479">Metal-binding</keyword>
<keyword id="KW-0949">S-adenosyl-L-methionine</keyword>
<keyword id="KW-0808">Transferase</keyword>